<reference key="1">
    <citation type="journal article" date="2008" name="BMC Genomics">
        <title>Comparative genomic analysis of the gut bacterium Bifidobacterium longum reveals loci susceptible to deletion during pure culture growth.</title>
        <authorList>
            <person name="Lee J.H."/>
            <person name="Karamychev V.N."/>
            <person name="Kozyavkin S.A."/>
            <person name="Mills D."/>
            <person name="Pavlov A.R."/>
            <person name="Pavlova N.V."/>
            <person name="Polouchine N.N."/>
            <person name="Richardson P.M."/>
            <person name="Shakhova V.V."/>
            <person name="Slesarev A.I."/>
            <person name="Weimer B."/>
            <person name="O'Sullivan D.J."/>
        </authorList>
    </citation>
    <scope>NUCLEOTIDE SEQUENCE [LARGE SCALE GENOMIC DNA]</scope>
    <source>
        <strain>DJO10A</strain>
    </source>
</reference>
<comment type="catalytic activity">
    <reaction evidence="1">
        <text>tRNA(Arg) + L-arginine + ATP = L-arginyl-tRNA(Arg) + AMP + diphosphate</text>
        <dbReference type="Rhea" id="RHEA:20301"/>
        <dbReference type="Rhea" id="RHEA-COMP:9658"/>
        <dbReference type="Rhea" id="RHEA-COMP:9673"/>
        <dbReference type="ChEBI" id="CHEBI:30616"/>
        <dbReference type="ChEBI" id="CHEBI:32682"/>
        <dbReference type="ChEBI" id="CHEBI:33019"/>
        <dbReference type="ChEBI" id="CHEBI:78442"/>
        <dbReference type="ChEBI" id="CHEBI:78513"/>
        <dbReference type="ChEBI" id="CHEBI:456215"/>
        <dbReference type="EC" id="6.1.1.19"/>
    </reaction>
</comment>
<comment type="subunit">
    <text evidence="1">Monomer.</text>
</comment>
<comment type="subcellular location">
    <subcellularLocation>
        <location evidence="1">Cytoplasm</location>
    </subcellularLocation>
</comment>
<comment type="similarity">
    <text evidence="1">Belongs to the class-I aminoacyl-tRNA synthetase family.</text>
</comment>
<organism>
    <name type="scientific">Bifidobacterium longum (strain DJO10A)</name>
    <dbReference type="NCBI Taxonomy" id="205913"/>
    <lineage>
        <taxon>Bacteria</taxon>
        <taxon>Bacillati</taxon>
        <taxon>Actinomycetota</taxon>
        <taxon>Actinomycetes</taxon>
        <taxon>Bifidobacteriales</taxon>
        <taxon>Bifidobacteriaceae</taxon>
        <taxon>Bifidobacterium</taxon>
    </lineage>
</organism>
<proteinExistence type="inferred from homology"/>
<feature type="chain" id="PRO_1000095334" description="Arginine--tRNA ligase">
    <location>
        <begin position="1"/>
        <end position="620"/>
    </location>
</feature>
<feature type="short sequence motif" description="'HIGH' region">
    <location>
        <begin position="147"/>
        <end position="157"/>
    </location>
</feature>
<gene>
    <name evidence="1" type="primary">argS</name>
    <name type="ordered locus">BLD_1605</name>
</gene>
<protein>
    <recommendedName>
        <fullName evidence="1">Arginine--tRNA ligase</fullName>
        <ecNumber evidence="1">6.1.1.19</ecNumber>
    </recommendedName>
    <alternativeName>
        <fullName evidence="1">Arginyl-tRNA synthetase</fullName>
        <shortName evidence="1">ArgRS</shortName>
    </alternativeName>
</protein>
<evidence type="ECO:0000255" key="1">
    <source>
        <dbReference type="HAMAP-Rule" id="MF_00123"/>
    </source>
</evidence>
<keyword id="KW-0030">Aminoacyl-tRNA synthetase</keyword>
<keyword id="KW-0067">ATP-binding</keyword>
<keyword id="KW-0963">Cytoplasm</keyword>
<keyword id="KW-0436">Ligase</keyword>
<keyword id="KW-0547">Nucleotide-binding</keyword>
<keyword id="KW-0648">Protein biosynthesis</keyword>
<dbReference type="EC" id="6.1.1.19" evidence="1"/>
<dbReference type="EMBL" id="CP000605">
    <property type="protein sequence ID" value="ACD99050.1"/>
    <property type="molecule type" value="Genomic_DNA"/>
</dbReference>
<dbReference type="RefSeq" id="WP_010081268.1">
    <property type="nucleotide sequence ID" value="NZ_AABM02000009.1"/>
</dbReference>
<dbReference type="SMR" id="B3DPJ1"/>
<dbReference type="KEGG" id="blj:BLD_1605"/>
<dbReference type="HOGENOM" id="CLU_006406_0_1_11"/>
<dbReference type="Proteomes" id="UP000002419">
    <property type="component" value="Chromosome"/>
</dbReference>
<dbReference type="GO" id="GO:0005737">
    <property type="term" value="C:cytoplasm"/>
    <property type="evidence" value="ECO:0007669"/>
    <property type="project" value="UniProtKB-SubCell"/>
</dbReference>
<dbReference type="GO" id="GO:0004814">
    <property type="term" value="F:arginine-tRNA ligase activity"/>
    <property type="evidence" value="ECO:0007669"/>
    <property type="project" value="UniProtKB-UniRule"/>
</dbReference>
<dbReference type="GO" id="GO:0005524">
    <property type="term" value="F:ATP binding"/>
    <property type="evidence" value="ECO:0007669"/>
    <property type="project" value="UniProtKB-UniRule"/>
</dbReference>
<dbReference type="GO" id="GO:0006420">
    <property type="term" value="P:arginyl-tRNA aminoacylation"/>
    <property type="evidence" value="ECO:0007669"/>
    <property type="project" value="UniProtKB-UniRule"/>
</dbReference>
<dbReference type="CDD" id="cd00671">
    <property type="entry name" value="ArgRS_core"/>
    <property type="match status" value="1"/>
</dbReference>
<dbReference type="FunFam" id="3.40.50.620:FF:000062">
    <property type="entry name" value="Arginine--tRNA ligase"/>
    <property type="match status" value="1"/>
</dbReference>
<dbReference type="Gene3D" id="3.30.1360.70">
    <property type="entry name" value="Arginyl tRNA synthetase N-terminal domain"/>
    <property type="match status" value="1"/>
</dbReference>
<dbReference type="Gene3D" id="3.40.50.620">
    <property type="entry name" value="HUPs"/>
    <property type="match status" value="1"/>
</dbReference>
<dbReference type="Gene3D" id="1.10.730.10">
    <property type="entry name" value="Isoleucyl-tRNA Synthetase, Domain 1"/>
    <property type="match status" value="1"/>
</dbReference>
<dbReference type="HAMAP" id="MF_00123">
    <property type="entry name" value="Arg_tRNA_synth"/>
    <property type="match status" value="1"/>
</dbReference>
<dbReference type="InterPro" id="IPR001412">
    <property type="entry name" value="aa-tRNA-synth_I_CS"/>
</dbReference>
<dbReference type="InterPro" id="IPR001278">
    <property type="entry name" value="Arg-tRNA-ligase"/>
</dbReference>
<dbReference type="InterPro" id="IPR005148">
    <property type="entry name" value="Arg-tRNA-synth_N"/>
</dbReference>
<dbReference type="InterPro" id="IPR036695">
    <property type="entry name" value="Arg-tRNA-synth_N_sf"/>
</dbReference>
<dbReference type="InterPro" id="IPR035684">
    <property type="entry name" value="ArgRS_core"/>
</dbReference>
<dbReference type="InterPro" id="IPR008909">
    <property type="entry name" value="DALR_anticod-bd"/>
</dbReference>
<dbReference type="InterPro" id="IPR014729">
    <property type="entry name" value="Rossmann-like_a/b/a_fold"/>
</dbReference>
<dbReference type="InterPro" id="IPR009080">
    <property type="entry name" value="tRNAsynth_Ia_anticodon-bd"/>
</dbReference>
<dbReference type="NCBIfam" id="TIGR00456">
    <property type="entry name" value="argS"/>
    <property type="match status" value="1"/>
</dbReference>
<dbReference type="PANTHER" id="PTHR11956:SF5">
    <property type="entry name" value="ARGININE--TRNA LIGASE, CYTOPLASMIC"/>
    <property type="match status" value="1"/>
</dbReference>
<dbReference type="PANTHER" id="PTHR11956">
    <property type="entry name" value="ARGINYL-TRNA SYNTHETASE"/>
    <property type="match status" value="1"/>
</dbReference>
<dbReference type="Pfam" id="PF03485">
    <property type="entry name" value="Arg_tRNA_synt_N"/>
    <property type="match status" value="1"/>
</dbReference>
<dbReference type="Pfam" id="PF05746">
    <property type="entry name" value="DALR_1"/>
    <property type="match status" value="1"/>
</dbReference>
<dbReference type="Pfam" id="PF00750">
    <property type="entry name" value="tRNA-synt_1d"/>
    <property type="match status" value="1"/>
</dbReference>
<dbReference type="PRINTS" id="PR01038">
    <property type="entry name" value="TRNASYNTHARG"/>
</dbReference>
<dbReference type="SMART" id="SM01016">
    <property type="entry name" value="Arg_tRNA_synt_N"/>
    <property type="match status" value="1"/>
</dbReference>
<dbReference type="SMART" id="SM00836">
    <property type="entry name" value="DALR_1"/>
    <property type="match status" value="1"/>
</dbReference>
<dbReference type="SUPFAM" id="SSF47323">
    <property type="entry name" value="Anticodon-binding domain of a subclass of class I aminoacyl-tRNA synthetases"/>
    <property type="match status" value="1"/>
</dbReference>
<dbReference type="SUPFAM" id="SSF55190">
    <property type="entry name" value="Arginyl-tRNA synthetase (ArgRS), N-terminal 'additional' domain"/>
    <property type="match status" value="1"/>
</dbReference>
<dbReference type="SUPFAM" id="SSF52374">
    <property type="entry name" value="Nucleotidylyl transferase"/>
    <property type="match status" value="1"/>
</dbReference>
<dbReference type="PROSITE" id="PS00178">
    <property type="entry name" value="AA_TRNA_LIGASE_I"/>
    <property type="match status" value="1"/>
</dbReference>
<name>SYR_BIFLD</name>
<sequence length="620" mass="67292">MSPEALSELISSIAHNLVAAGQAGALTDELIPPVDKLAVMRPKDRAHGDWASNIAMQLAKKAGMKPRDLAEPFAAALAEADGIAKVEVAGPGFINITLDSASAAAVVDTVLAAGAMTDTDKHLNKVNEYGRNAHLGGQTLNLEFVSANPTGPIHIGGTRWAAVGDAMARVLEANGAKVVREYYFNDHGEQINRFAKSLVAAWAEANNLGEAGYQTETPCDGYKGAYINEIAARVQAEAESDGVDLTALAHQDQGLNDDGEPLGEADTEVREEFRKRAVPMMFDEIQKSMKDFRVNFDVWFHENSLYADGKVDAAIEELKSRGDIFDKDGATWFESTKHGDDKDRVIIKSNGEFAYFAADIAYYWDKRHRAENPADVAIYMLGADHHGYIGRMMAMCAAFGDEPGKNMQILIGQLVNVMKDGKPVRMSKRAGNVVTIDDLVSVVGVDAARYSLARSDYNQNFDIDLALLASHTNDNPVYYVQYAHARSKNVDRNAAVAGISYEGADLALLDTEADGEVLAALAQFPSVLATAADDRQPHKVARYLEELAATYHKWYNVERVVPMALTDPETRGDDEARKALEIAKNPEPARAAARLKLNDAVQQVIANGLDLLGVTAPEKM</sequence>
<accession>B3DPJ1</accession>